<protein>
    <recommendedName>
        <fullName evidence="1">Citrate lyase acyl carrier protein</fullName>
    </recommendedName>
    <alternativeName>
        <fullName evidence="1">Citrate lyase gamma chain</fullName>
    </alternativeName>
</protein>
<dbReference type="EMBL" id="BX950851">
    <property type="protein sequence ID" value="CAG75472.1"/>
    <property type="molecule type" value="Genomic_DNA"/>
</dbReference>
<dbReference type="RefSeq" id="WP_011094118.1">
    <property type="nucleotide sequence ID" value="NC_004547.2"/>
</dbReference>
<dbReference type="SMR" id="Q6D421"/>
<dbReference type="STRING" id="218491.ECA2573"/>
<dbReference type="GeneID" id="57208731"/>
<dbReference type="KEGG" id="eca:ECA2573"/>
<dbReference type="PATRIC" id="fig|218491.5.peg.2607"/>
<dbReference type="eggNOG" id="COG3052">
    <property type="taxonomic scope" value="Bacteria"/>
</dbReference>
<dbReference type="HOGENOM" id="CLU_158489_0_0_6"/>
<dbReference type="OrthoDB" id="9798736at2"/>
<dbReference type="Proteomes" id="UP000007966">
    <property type="component" value="Chromosome"/>
</dbReference>
<dbReference type="GO" id="GO:0005737">
    <property type="term" value="C:cytoplasm"/>
    <property type="evidence" value="ECO:0007669"/>
    <property type="project" value="UniProtKB-SubCell"/>
</dbReference>
<dbReference type="HAMAP" id="MF_00805">
    <property type="entry name" value="CitD"/>
    <property type="match status" value="1"/>
</dbReference>
<dbReference type="InterPro" id="IPR006495">
    <property type="entry name" value="CitD"/>
</dbReference>
<dbReference type="InterPro" id="IPR023439">
    <property type="entry name" value="Mal_deCO2ase/Cit_lyase_ACP"/>
</dbReference>
<dbReference type="NCBIfam" id="TIGR01608">
    <property type="entry name" value="citD"/>
    <property type="match status" value="1"/>
</dbReference>
<dbReference type="NCBIfam" id="NF009726">
    <property type="entry name" value="PRK13253.1"/>
    <property type="match status" value="1"/>
</dbReference>
<dbReference type="Pfam" id="PF06857">
    <property type="entry name" value="ACP"/>
    <property type="match status" value="1"/>
</dbReference>
<dbReference type="PIRSF" id="PIRSF002736">
    <property type="entry name" value="Citrt_lyas_gamma"/>
    <property type="match status" value="1"/>
</dbReference>
<sequence>MKIVKESLAGTFESSDLLVKVAPADGKLTVVINSEVIKQFGHQIKQVVNDTLKELGVQEGTIIVDDKGALDCVIRARVQSAVLRATDGQQIEWEKL</sequence>
<keyword id="KW-0963">Cytoplasm</keyword>
<keyword id="KW-0597">Phosphoprotein</keyword>
<keyword id="KW-1185">Reference proteome</keyword>
<organism>
    <name type="scientific">Pectobacterium atrosepticum (strain SCRI 1043 / ATCC BAA-672)</name>
    <name type="common">Erwinia carotovora subsp. atroseptica</name>
    <dbReference type="NCBI Taxonomy" id="218491"/>
    <lineage>
        <taxon>Bacteria</taxon>
        <taxon>Pseudomonadati</taxon>
        <taxon>Pseudomonadota</taxon>
        <taxon>Gammaproteobacteria</taxon>
        <taxon>Enterobacterales</taxon>
        <taxon>Pectobacteriaceae</taxon>
        <taxon>Pectobacterium</taxon>
    </lineage>
</organism>
<gene>
    <name evidence="1" type="primary">citD</name>
    <name type="ordered locus">ECA2573</name>
</gene>
<proteinExistence type="inferred from homology"/>
<accession>Q6D421</accession>
<reference key="1">
    <citation type="journal article" date="2004" name="Proc. Natl. Acad. Sci. U.S.A.">
        <title>Genome sequence of the enterobacterial phytopathogen Erwinia carotovora subsp. atroseptica and characterization of virulence factors.</title>
        <authorList>
            <person name="Bell K.S."/>
            <person name="Sebaihia M."/>
            <person name="Pritchard L."/>
            <person name="Holden M.T.G."/>
            <person name="Hyman L.J."/>
            <person name="Holeva M.C."/>
            <person name="Thomson N.R."/>
            <person name="Bentley S.D."/>
            <person name="Churcher L.J.C."/>
            <person name="Mungall K."/>
            <person name="Atkin R."/>
            <person name="Bason N."/>
            <person name="Brooks K."/>
            <person name="Chillingworth T."/>
            <person name="Clark K."/>
            <person name="Doggett J."/>
            <person name="Fraser A."/>
            <person name="Hance Z."/>
            <person name="Hauser H."/>
            <person name="Jagels K."/>
            <person name="Moule S."/>
            <person name="Norbertczak H."/>
            <person name="Ormond D."/>
            <person name="Price C."/>
            <person name="Quail M.A."/>
            <person name="Sanders M."/>
            <person name="Walker D."/>
            <person name="Whitehead S."/>
            <person name="Salmond G.P.C."/>
            <person name="Birch P.R.J."/>
            <person name="Parkhill J."/>
            <person name="Toth I.K."/>
        </authorList>
    </citation>
    <scope>NUCLEOTIDE SEQUENCE [LARGE SCALE GENOMIC DNA]</scope>
    <source>
        <strain>SCRI 1043 / ATCC BAA-672</strain>
    </source>
</reference>
<comment type="function">
    <text evidence="1">Covalent carrier of the coenzyme of citrate lyase.</text>
</comment>
<comment type="subunit">
    <text evidence="1">Oligomer with a subunit composition of (alpha,beta,gamma)6.</text>
</comment>
<comment type="subcellular location">
    <subcellularLocation>
        <location evidence="1">Cytoplasm</location>
    </subcellularLocation>
</comment>
<comment type="similarity">
    <text evidence="1">Belongs to the CitD family.</text>
</comment>
<feature type="chain" id="PRO_0000214697" description="Citrate lyase acyl carrier protein">
    <location>
        <begin position="1"/>
        <end position="96"/>
    </location>
</feature>
<feature type="modified residue" description="O-(phosphoribosyl dephospho-coenzyme A)serine" evidence="1">
    <location>
        <position position="14"/>
    </location>
</feature>
<evidence type="ECO:0000255" key="1">
    <source>
        <dbReference type="HAMAP-Rule" id="MF_00805"/>
    </source>
</evidence>
<name>CITD_PECAS</name>